<accession>B1AJ24</accession>
<keyword id="KW-0963">Cytoplasm</keyword>
<keyword id="KW-0238">DNA-binding</keyword>
<keyword id="KW-0677">Repeat</keyword>
<keyword id="KW-0804">Transcription</keyword>
<keyword id="KW-0805">Transcription regulation</keyword>
<protein>
    <recommendedName>
        <fullName>Transcriptional regulator MraZ</fullName>
    </recommendedName>
</protein>
<gene>
    <name evidence="1" type="primary">mraZ</name>
    <name type="ordered locus">UPA3_0401</name>
</gene>
<proteinExistence type="inferred from homology"/>
<sequence length="145" mass="16565">MFIGTYNHSIDSKNRMLVPSKVKATLGEAIFVYLSLGFDGNIDMRLESEFNQFVNNINNLLIGSKEARNLTRLILSQTYKIEIDSASRILIPQNLIDKAKIKKDIYIIGTNDRYEIWAKEVYDDFSLNQESTLSDLAEKLLINGI</sequence>
<feature type="chain" id="PRO_1000084027" description="Transcriptional regulator MraZ">
    <location>
        <begin position="1"/>
        <end position="145"/>
    </location>
</feature>
<feature type="domain" description="SpoVT-AbrB 1" evidence="2">
    <location>
        <begin position="5"/>
        <end position="49"/>
    </location>
</feature>
<feature type="domain" description="SpoVT-AbrB 2" evidence="2">
    <location>
        <begin position="78"/>
        <end position="121"/>
    </location>
</feature>
<dbReference type="EMBL" id="CP000942">
    <property type="protein sequence ID" value="ACA33159.1"/>
    <property type="molecule type" value="Genomic_DNA"/>
</dbReference>
<dbReference type="RefSeq" id="WP_010891757.1">
    <property type="nucleotide sequence ID" value="NC_010503.1"/>
</dbReference>
<dbReference type="SMR" id="B1AJ24"/>
<dbReference type="GeneID" id="29672219"/>
<dbReference type="KEGG" id="upa:UPA3_0401"/>
<dbReference type="HOGENOM" id="CLU_107907_0_0_14"/>
<dbReference type="Proteomes" id="UP000002162">
    <property type="component" value="Chromosome"/>
</dbReference>
<dbReference type="GO" id="GO:0005737">
    <property type="term" value="C:cytoplasm"/>
    <property type="evidence" value="ECO:0007669"/>
    <property type="project" value="UniProtKB-UniRule"/>
</dbReference>
<dbReference type="GO" id="GO:0009295">
    <property type="term" value="C:nucleoid"/>
    <property type="evidence" value="ECO:0007669"/>
    <property type="project" value="UniProtKB-SubCell"/>
</dbReference>
<dbReference type="GO" id="GO:0003700">
    <property type="term" value="F:DNA-binding transcription factor activity"/>
    <property type="evidence" value="ECO:0007669"/>
    <property type="project" value="UniProtKB-UniRule"/>
</dbReference>
<dbReference type="GO" id="GO:0000976">
    <property type="term" value="F:transcription cis-regulatory region binding"/>
    <property type="evidence" value="ECO:0007669"/>
    <property type="project" value="TreeGrafter"/>
</dbReference>
<dbReference type="GO" id="GO:2000143">
    <property type="term" value="P:negative regulation of DNA-templated transcription initiation"/>
    <property type="evidence" value="ECO:0007669"/>
    <property type="project" value="TreeGrafter"/>
</dbReference>
<dbReference type="CDD" id="cd16321">
    <property type="entry name" value="MraZ_C"/>
    <property type="match status" value="1"/>
</dbReference>
<dbReference type="CDD" id="cd16320">
    <property type="entry name" value="MraZ_N"/>
    <property type="match status" value="1"/>
</dbReference>
<dbReference type="Gene3D" id="3.40.1550.20">
    <property type="entry name" value="Transcriptional regulator MraZ domain"/>
    <property type="match status" value="1"/>
</dbReference>
<dbReference type="HAMAP" id="MF_01008">
    <property type="entry name" value="MraZ"/>
    <property type="match status" value="1"/>
</dbReference>
<dbReference type="InterPro" id="IPR003444">
    <property type="entry name" value="MraZ"/>
</dbReference>
<dbReference type="InterPro" id="IPR035644">
    <property type="entry name" value="MraZ_C"/>
</dbReference>
<dbReference type="InterPro" id="IPR020603">
    <property type="entry name" value="MraZ_dom"/>
</dbReference>
<dbReference type="InterPro" id="IPR035642">
    <property type="entry name" value="MraZ_N"/>
</dbReference>
<dbReference type="InterPro" id="IPR038619">
    <property type="entry name" value="MraZ_sf"/>
</dbReference>
<dbReference type="InterPro" id="IPR007159">
    <property type="entry name" value="SpoVT-AbrB_dom"/>
</dbReference>
<dbReference type="InterPro" id="IPR037914">
    <property type="entry name" value="SpoVT-AbrB_sf"/>
</dbReference>
<dbReference type="NCBIfam" id="TIGR00242">
    <property type="entry name" value="division/cell wall cluster transcriptional repressor MraZ"/>
    <property type="match status" value="1"/>
</dbReference>
<dbReference type="PANTHER" id="PTHR34701">
    <property type="entry name" value="TRANSCRIPTIONAL REGULATOR MRAZ"/>
    <property type="match status" value="1"/>
</dbReference>
<dbReference type="PANTHER" id="PTHR34701:SF1">
    <property type="entry name" value="TRANSCRIPTIONAL REGULATOR MRAZ"/>
    <property type="match status" value="1"/>
</dbReference>
<dbReference type="Pfam" id="PF02381">
    <property type="entry name" value="MraZ"/>
    <property type="match status" value="2"/>
</dbReference>
<dbReference type="SUPFAM" id="SSF89447">
    <property type="entry name" value="AbrB/MazE/MraZ-like"/>
    <property type="match status" value="1"/>
</dbReference>
<dbReference type="PROSITE" id="PS51740">
    <property type="entry name" value="SPOVT_ABRB"/>
    <property type="match status" value="2"/>
</dbReference>
<organism>
    <name type="scientific">Ureaplasma parvum serovar 3 (strain ATCC 27815 / 27 / NCTC 11736)</name>
    <dbReference type="NCBI Taxonomy" id="505682"/>
    <lineage>
        <taxon>Bacteria</taxon>
        <taxon>Bacillati</taxon>
        <taxon>Mycoplasmatota</taxon>
        <taxon>Mycoplasmoidales</taxon>
        <taxon>Mycoplasmoidaceae</taxon>
        <taxon>Ureaplasma</taxon>
    </lineage>
</organism>
<name>MRAZ_UREP2</name>
<reference key="1">
    <citation type="submission" date="2008-02" db="EMBL/GenBank/DDBJ databases">
        <title>Genome sequence of Ureaplasma parvum serovar 3.</title>
        <authorList>
            <person name="Methe B.A."/>
            <person name="Glass J."/>
            <person name="Waites K."/>
            <person name="Shrivastava S."/>
        </authorList>
    </citation>
    <scope>NUCLEOTIDE SEQUENCE [LARGE SCALE GENOMIC DNA]</scope>
    <source>
        <strain>ATCC 27815 / 27 / NCTC 11736</strain>
    </source>
</reference>
<comment type="subunit">
    <text evidence="1">Forms oligomers.</text>
</comment>
<comment type="subcellular location">
    <subcellularLocation>
        <location evidence="1">Cytoplasm</location>
        <location evidence="1">Nucleoid</location>
    </subcellularLocation>
</comment>
<comment type="similarity">
    <text evidence="1">Belongs to the MraZ family.</text>
</comment>
<evidence type="ECO:0000255" key="1">
    <source>
        <dbReference type="HAMAP-Rule" id="MF_01008"/>
    </source>
</evidence>
<evidence type="ECO:0000255" key="2">
    <source>
        <dbReference type="PROSITE-ProRule" id="PRU01076"/>
    </source>
</evidence>